<dbReference type="EC" id="2.7.2.11" evidence="1"/>
<dbReference type="EMBL" id="CP000822">
    <property type="protein sequence ID" value="ABV14058.1"/>
    <property type="molecule type" value="Genomic_DNA"/>
</dbReference>
<dbReference type="RefSeq" id="WP_012133771.1">
    <property type="nucleotide sequence ID" value="NC_009792.1"/>
</dbReference>
<dbReference type="SMR" id="A8AKP5"/>
<dbReference type="STRING" id="290338.CKO_02953"/>
<dbReference type="GeneID" id="45136770"/>
<dbReference type="KEGG" id="cko:CKO_02953"/>
<dbReference type="HOGENOM" id="CLU_025400_2_0_6"/>
<dbReference type="OrthoDB" id="9804434at2"/>
<dbReference type="UniPathway" id="UPA00098">
    <property type="reaction ID" value="UER00359"/>
</dbReference>
<dbReference type="Proteomes" id="UP000008148">
    <property type="component" value="Chromosome"/>
</dbReference>
<dbReference type="GO" id="GO:0005829">
    <property type="term" value="C:cytosol"/>
    <property type="evidence" value="ECO:0007669"/>
    <property type="project" value="TreeGrafter"/>
</dbReference>
<dbReference type="GO" id="GO:0005524">
    <property type="term" value="F:ATP binding"/>
    <property type="evidence" value="ECO:0007669"/>
    <property type="project" value="UniProtKB-KW"/>
</dbReference>
<dbReference type="GO" id="GO:0004349">
    <property type="term" value="F:glutamate 5-kinase activity"/>
    <property type="evidence" value="ECO:0007669"/>
    <property type="project" value="UniProtKB-UniRule"/>
</dbReference>
<dbReference type="GO" id="GO:0003723">
    <property type="term" value="F:RNA binding"/>
    <property type="evidence" value="ECO:0007669"/>
    <property type="project" value="InterPro"/>
</dbReference>
<dbReference type="GO" id="GO:0055129">
    <property type="term" value="P:L-proline biosynthetic process"/>
    <property type="evidence" value="ECO:0007669"/>
    <property type="project" value="UniProtKB-UniRule"/>
</dbReference>
<dbReference type="CDD" id="cd04242">
    <property type="entry name" value="AAK_G5K_ProB"/>
    <property type="match status" value="1"/>
</dbReference>
<dbReference type="CDD" id="cd21157">
    <property type="entry name" value="PUA_G5K"/>
    <property type="match status" value="1"/>
</dbReference>
<dbReference type="FunFam" id="2.30.130.10:FF:000003">
    <property type="entry name" value="Glutamate 5-kinase"/>
    <property type="match status" value="1"/>
</dbReference>
<dbReference type="FunFam" id="3.40.1160.10:FF:000006">
    <property type="entry name" value="Glutamate 5-kinase"/>
    <property type="match status" value="1"/>
</dbReference>
<dbReference type="Gene3D" id="3.40.1160.10">
    <property type="entry name" value="Acetylglutamate kinase-like"/>
    <property type="match status" value="2"/>
</dbReference>
<dbReference type="Gene3D" id="2.30.130.10">
    <property type="entry name" value="PUA domain"/>
    <property type="match status" value="1"/>
</dbReference>
<dbReference type="HAMAP" id="MF_00456">
    <property type="entry name" value="ProB"/>
    <property type="match status" value="1"/>
</dbReference>
<dbReference type="InterPro" id="IPR036393">
    <property type="entry name" value="AceGlu_kinase-like_sf"/>
</dbReference>
<dbReference type="InterPro" id="IPR001048">
    <property type="entry name" value="Asp/Glu/Uridylate_kinase"/>
</dbReference>
<dbReference type="InterPro" id="IPR041739">
    <property type="entry name" value="G5K_ProB"/>
</dbReference>
<dbReference type="InterPro" id="IPR001057">
    <property type="entry name" value="Glu/AcGlu_kinase"/>
</dbReference>
<dbReference type="InterPro" id="IPR011529">
    <property type="entry name" value="Glu_5kinase"/>
</dbReference>
<dbReference type="InterPro" id="IPR005715">
    <property type="entry name" value="Glu_5kinase/COase_Synthase"/>
</dbReference>
<dbReference type="InterPro" id="IPR019797">
    <property type="entry name" value="Glutamate_5-kinase_CS"/>
</dbReference>
<dbReference type="InterPro" id="IPR002478">
    <property type="entry name" value="PUA"/>
</dbReference>
<dbReference type="InterPro" id="IPR015947">
    <property type="entry name" value="PUA-like_sf"/>
</dbReference>
<dbReference type="InterPro" id="IPR036974">
    <property type="entry name" value="PUA_sf"/>
</dbReference>
<dbReference type="NCBIfam" id="TIGR01027">
    <property type="entry name" value="proB"/>
    <property type="match status" value="1"/>
</dbReference>
<dbReference type="PANTHER" id="PTHR43654">
    <property type="entry name" value="GLUTAMATE 5-KINASE"/>
    <property type="match status" value="1"/>
</dbReference>
<dbReference type="PANTHER" id="PTHR43654:SF1">
    <property type="entry name" value="ISOPENTENYL PHOSPHATE KINASE"/>
    <property type="match status" value="1"/>
</dbReference>
<dbReference type="Pfam" id="PF00696">
    <property type="entry name" value="AA_kinase"/>
    <property type="match status" value="1"/>
</dbReference>
<dbReference type="Pfam" id="PF01472">
    <property type="entry name" value="PUA"/>
    <property type="match status" value="1"/>
</dbReference>
<dbReference type="PIRSF" id="PIRSF000729">
    <property type="entry name" value="GK"/>
    <property type="match status" value="1"/>
</dbReference>
<dbReference type="PRINTS" id="PR00474">
    <property type="entry name" value="GLU5KINASE"/>
</dbReference>
<dbReference type="SMART" id="SM00359">
    <property type="entry name" value="PUA"/>
    <property type="match status" value="1"/>
</dbReference>
<dbReference type="SUPFAM" id="SSF53633">
    <property type="entry name" value="Carbamate kinase-like"/>
    <property type="match status" value="1"/>
</dbReference>
<dbReference type="SUPFAM" id="SSF88697">
    <property type="entry name" value="PUA domain-like"/>
    <property type="match status" value="1"/>
</dbReference>
<dbReference type="PROSITE" id="PS00902">
    <property type="entry name" value="GLUTAMATE_5_KINASE"/>
    <property type="match status" value="1"/>
</dbReference>
<dbReference type="PROSITE" id="PS50890">
    <property type="entry name" value="PUA"/>
    <property type="match status" value="1"/>
</dbReference>
<gene>
    <name evidence="1" type="primary">proB</name>
    <name type="ordered locus">CKO_02953</name>
</gene>
<name>PROB_CITK8</name>
<comment type="function">
    <text evidence="1">Catalyzes the transfer of a phosphate group to glutamate to form L-glutamate 5-phosphate.</text>
</comment>
<comment type="catalytic activity">
    <reaction evidence="1">
        <text>L-glutamate + ATP = L-glutamyl 5-phosphate + ADP</text>
        <dbReference type="Rhea" id="RHEA:14877"/>
        <dbReference type="ChEBI" id="CHEBI:29985"/>
        <dbReference type="ChEBI" id="CHEBI:30616"/>
        <dbReference type="ChEBI" id="CHEBI:58274"/>
        <dbReference type="ChEBI" id="CHEBI:456216"/>
        <dbReference type="EC" id="2.7.2.11"/>
    </reaction>
</comment>
<comment type="pathway">
    <text evidence="1">Amino-acid biosynthesis; L-proline biosynthesis; L-glutamate 5-semialdehyde from L-glutamate: step 1/2.</text>
</comment>
<comment type="subcellular location">
    <subcellularLocation>
        <location evidence="1">Cytoplasm</location>
    </subcellularLocation>
</comment>
<comment type="similarity">
    <text evidence="1">Belongs to the glutamate 5-kinase family.</text>
</comment>
<feature type="chain" id="PRO_1000081049" description="Glutamate 5-kinase">
    <location>
        <begin position="1"/>
        <end position="367"/>
    </location>
</feature>
<feature type="domain" description="PUA" evidence="1">
    <location>
        <begin position="275"/>
        <end position="353"/>
    </location>
</feature>
<feature type="binding site" evidence="1">
    <location>
        <position position="10"/>
    </location>
    <ligand>
        <name>ATP</name>
        <dbReference type="ChEBI" id="CHEBI:30616"/>
    </ligand>
</feature>
<feature type="binding site" evidence="1">
    <location>
        <position position="50"/>
    </location>
    <ligand>
        <name>substrate</name>
    </ligand>
</feature>
<feature type="binding site" evidence="1">
    <location>
        <position position="137"/>
    </location>
    <ligand>
        <name>substrate</name>
    </ligand>
</feature>
<feature type="binding site" evidence="1">
    <location>
        <position position="149"/>
    </location>
    <ligand>
        <name>substrate</name>
    </ligand>
</feature>
<feature type="binding site" evidence="1">
    <location>
        <begin position="169"/>
        <end position="170"/>
    </location>
    <ligand>
        <name>ATP</name>
        <dbReference type="ChEBI" id="CHEBI:30616"/>
    </ligand>
</feature>
<feature type="binding site" evidence="1">
    <location>
        <begin position="211"/>
        <end position="217"/>
    </location>
    <ligand>
        <name>ATP</name>
        <dbReference type="ChEBI" id="CHEBI:30616"/>
    </ligand>
</feature>
<sequence>MSDSQTLVVKLGTSVLTGGSRRLNRAHIVELVRQCAQLHAAGHRIVIVTSGAIAAGREHLGYPELPATIASKQLLAAVGQSRLIQLWEQLFSIYGIHIGQMLLTRADMEDRERFLNARDTLRALLDNNIVPVINENDAVATAEIKVGDNDNLSALAAILAGADKLLLLTDQQGLFTADPRTNPQAELIKDVYGIDDALRAIAGDSVSGLGTGGMGTKLQAADVACRAGIDTIIAAGSKPGVIGDVMAGISAGTRFHAQASPLENRKRWIFGAPPAGEITVDEGATSAILERGSSLLPKGIKSVTGNFSRGEVIRIRNQEGRDIAHGVTRYNSDALRRIAGHHSQQIDAILGYEYGPVAVHRDDMITR</sequence>
<keyword id="KW-0028">Amino-acid biosynthesis</keyword>
<keyword id="KW-0067">ATP-binding</keyword>
<keyword id="KW-0963">Cytoplasm</keyword>
<keyword id="KW-0418">Kinase</keyword>
<keyword id="KW-0547">Nucleotide-binding</keyword>
<keyword id="KW-0641">Proline biosynthesis</keyword>
<keyword id="KW-1185">Reference proteome</keyword>
<keyword id="KW-0808">Transferase</keyword>
<protein>
    <recommendedName>
        <fullName evidence="1">Glutamate 5-kinase</fullName>
        <ecNumber evidence="1">2.7.2.11</ecNumber>
    </recommendedName>
    <alternativeName>
        <fullName evidence="1">Gamma-glutamyl kinase</fullName>
        <shortName evidence="1">GK</shortName>
    </alternativeName>
</protein>
<reference key="1">
    <citation type="submission" date="2007-08" db="EMBL/GenBank/DDBJ databases">
        <authorList>
            <consortium name="The Citrobacter koseri Genome Sequencing Project"/>
            <person name="McClelland M."/>
            <person name="Sanderson E.K."/>
            <person name="Porwollik S."/>
            <person name="Spieth J."/>
            <person name="Clifton W.S."/>
            <person name="Latreille P."/>
            <person name="Courtney L."/>
            <person name="Wang C."/>
            <person name="Pepin K."/>
            <person name="Bhonagiri V."/>
            <person name="Nash W."/>
            <person name="Johnson M."/>
            <person name="Thiruvilangam P."/>
            <person name="Wilson R."/>
        </authorList>
    </citation>
    <scope>NUCLEOTIDE SEQUENCE [LARGE SCALE GENOMIC DNA]</scope>
    <source>
        <strain>ATCC BAA-895 / CDC 4225-83 / SGSC4696</strain>
    </source>
</reference>
<evidence type="ECO:0000255" key="1">
    <source>
        <dbReference type="HAMAP-Rule" id="MF_00456"/>
    </source>
</evidence>
<accession>A8AKP5</accession>
<organism>
    <name type="scientific">Citrobacter koseri (strain ATCC BAA-895 / CDC 4225-83 / SGSC4696)</name>
    <dbReference type="NCBI Taxonomy" id="290338"/>
    <lineage>
        <taxon>Bacteria</taxon>
        <taxon>Pseudomonadati</taxon>
        <taxon>Pseudomonadota</taxon>
        <taxon>Gammaproteobacteria</taxon>
        <taxon>Enterobacterales</taxon>
        <taxon>Enterobacteriaceae</taxon>
        <taxon>Citrobacter</taxon>
    </lineage>
</organism>
<proteinExistence type="inferred from homology"/>